<gene>
    <name type="primary">B2M</name>
</gene>
<dbReference type="EMBL" id="AY124692">
    <property type="protein sequence ID" value="AAM77021.1"/>
    <property type="molecule type" value="Genomic_DNA"/>
</dbReference>
<dbReference type="EMBL" id="AY124690">
    <property type="protein sequence ID" value="AAM77021.1"/>
    <property type="status" value="JOINED"/>
    <property type="molecule type" value="Genomic_DNA"/>
</dbReference>
<dbReference type="EMBL" id="AY124691">
    <property type="protein sequence ID" value="AAM77021.1"/>
    <property type="status" value="JOINED"/>
    <property type="molecule type" value="Genomic_DNA"/>
</dbReference>
<dbReference type="SMR" id="Q863B1"/>
<dbReference type="GO" id="GO:0005576">
    <property type="term" value="C:extracellular region"/>
    <property type="evidence" value="ECO:0007669"/>
    <property type="project" value="UniProtKB-SubCell"/>
</dbReference>
<dbReference type="GO" id="GO:0042612">
    <property type="term" value="C:MHC class I protein complex"/>
    <property type="evidence" value="ECO:0007669"/>
    <property type="project" value="UniProtKB-KW"/>
</dbReference>
<dbReference type="GO" id="GO:0002474">
    <property type="term" value="P:antigen processing and presentation of peptide antigen via MHC class I"/>
    <property type="evidence" value="ECO:0007669"/>
    <property type="project" value="UniProtKB-KW"/>
</dbReference>
<dbReference type="GO" id="GO:0006955">
    <property type="term" value="P:immune response"/>
    <property type="evidence" value="ECO:0007669"/>
    <property type="project" value="InterPro"/>
</dbReference>
<dbReference type="CDD" id="cd05770">
    <property type="entry name" value="IgC1_beta2m"/>
    <property type="match status" value="1"/>
</dbReference>
<dbReference type="FunFam" id="2.60.40.10:FF:001005">
    <property type="entry name" value="Beta-2-microglobulin"/>
    <property type="match status" value="1"/>
</dbReference>
<dbReference type="Gene3D" id="2.60.40.10">
    <property type="entry name" value="Immunoglobulins"/>
    <property type="match status" value="1"/>
</dbReference>
<dbReference type="InterPro" id="IPR015707">
    <property type="entry name" value="B2Microglobulin"/>
</dbReference>
<dbReference type="InterPro" id="IPR007110">
    <property type="entry name" value="Ig-like_dom"/>
</dbReference>
<dbReference type="InterPro" id="IPR036179">
    <property type="entry name" value="Ig-like_dom_sf"/>
</dbReference>
<dbReference type="InterPro" id="IPR013783">
    <property type="entry name" value="Ig-like_fold"/>
</dbReference>
<dbReference type="InterPro" id="IPR003006">
    <property type="entry name" value="Ig/MHC_CS"/>
</dbReference>
<dbReference type="InterPro" id="IPR003597">
    <property type="entry name" value="Ig_C1-set"/>
</dbReference>
<dbReference type="InterPro" id="IPR050160">
    <property type="entry name" value="MHC/Immunoglobulin"/>
</dbReference>
<dbReference type="PANTHER" id="PTHR19944:SF62">
    <property type="entry name" value="BETA-2-MICROGLOBULIN"/>
    <property type="match status" value="1"/>
</dbReference>
<dbReference type="PANTHER" id="PTHR19944">
    <property type="entry name" value="MHC CLASS II-RELATED"/>
    <property type="match status" value="1"/>
</dbReference>
<dbReference type="Pfam" id="PF07654">
    <property type="entry name" value="C1-set"/>
    <property type="match status" value="1"/>
</dbReference>
<dbReference type="SMART" id="SM00407">
    <property type="entry name" value="IGc1"/>
    <property type="match status" value="1"/>
</dbReference>
<dbReference type="SUPFAM" id="SSF48726">
    <property type="entry name" value="Immunoglobulin"/>
    <property type="match status" value="1"/>
</dbReference>
<dbReference type="PROSITE" id="PS50835">
    <property type="entry name" value="IG_LIKE"/>
    <property type="match status" value="1"/>
</dbReference>
<dbReference type="PROSITE" id="PS00290">
    <property type="entry name" value="IG_MHC"/>
    <property type="match status" value="1"/>
</dbReference>
<reference key="1">
    <citation type="journal article" date="2003" name="Immunogenetics">
        <title>Characterization of the beta(2)-microglobulin gene of the horse.</title>
        <authorList>
            <person name="Tallmadge R.L."/>
            <person name="Lear T.L."/>
            <person name="Johnson A.K."/>
            <person name="Guerin G."/>
            <person name="Millon L.V."/>
            <person name="Carpenter S.L."/>
            <person name="Antczak D.F."/>
        </authorList>
    </citation>
    <scope>NUCLEOTIDE SEQUENCE [GENOMIC DNA]</scope>
</reference>
<accession>Q863B1</accession>
<protein>
    <recommendedName>
        <fullName>Beta-2-microglobulin</fullName>
    </recommendedName>
</protein>
<organism>
    <name type="scientific">Equus quagga burchellii</name>
    <name type="common">Burchell's zebra</name>
    <name type="synonym">Equus burchelli</name>
    <dbReference type="NCBI Taxonomy" id="89252"/>
    <lineage>
        <taxon>Eukaryota</taxon>
        <taxon>Metazoa</taxon>
        <taxon>Chordata</taxon>
        <taxon>Craniata</taxon>
        <taxon>Vertebrata</taxon>
        <taxon>Euteleostomi</taxon>
        <taxon>Mammalia</taxon>
        <taxon>Eutheria</taxon>
        <taxon>Laurasiatheria</taxon>
        <taxon>Perissodactyla</taxon>
        <taxon>Equidae</taxon>
        <taxon>Equus</taxon>
        <taxon>Equus quagga</taxon>
    </lineage>
</organism>
<evidence type="ECO:0000250" key="1"/>
<evidence type="ECO:0000255" key="2"/>
<evidence type="ECO:0000255" key="3">
    <source>
        <dbReference type="PROSITE-ProRule" id="PRU00114"/>
    </source>
</evidence>
<evidence type="ECO:0000305" key="4"/>
<feature type="signal peptide" evidence="2">
    <location>
        <begin position="1"/>
        <end position="20"/>
    </location>
</feature>
<feature type="chain" id="PRO_0000041821" description="Beta-2-microglobulin">
    <location>
        <begin position="21"/>
        <end position="118"/>
    </location>
</feature>
<feature type="domain" description="Ig-like C1-type">
    <location>
        <begin position="25"/>
        <end position="111"/>
    </location>
</feature>
<feature type="disulfide bond" evidence="3">
    <location>
        <begin position="45"/>
        <end position="99"/>
    </location>
</feature>
<comment type="function">
    <text evidence="1">Component of the class I major histocompatibility complex (MHC). Involved in the presentation of peptide antigens to the immune system (By similarity).</text>
</comment>
<comment type="subunit">
    <text evidence="1">Heterodimer of an alpha chain and a beta chain. Beta-2-microglobulin is the beta-chain of major histocompatibility complex class I molecules (By similarity).</text>
</comment>
<comment type="subcellular location">
    <subcellularLocation>
        <location evidence="1">Secreted</location>
    </subcellularLocation>
</comment>
<comment type="similarity">
    <text evidence="4">Belongs to the beta-2-microglobulin family.</text>
</comment>
<proteinExistence type="inferred from homology"/>
<sequence>MARVVALVLLGLLSLTGLEAVQRIPKVQVYSRHPAENGKPNFLNCYVSGFHPPEIEIDLLKNGEKMKVDRSDLSFSKDWSFYLLVHTDFTPNGVDEYSCRVQHSTLKEPLIVKWDRDL</sequence>
<keyword id="KW-1015">Disulfide bond</keyword>
<keyword id="KW-0391">Immunity</keyword>
<keyword id="KW-0393">Immunoglobulin domain</keyword>
<keyword id="KW-0490">MHC I</keyword>
<keyword id="KW-0964">Secreted</keyword>
<keyword id="KW-0732">Signal</keyword>
<name>B2MG_EQUQB</name>